<protein>
    <recommendedName>
        <fullName evidence="1">Protein-L-isoaspartate O-methyltransferase</fullName>
        <ecNumber evidence="1">2.1.1.77</ecNumber>
    </recommendedName>
    <alternativeName>
        <fullName evidence="1">L-isoaspartyl protein carboxyl methyltransferase</fullName>
    </alternativeName>
    <alternativeName>
        <fullName evidence="1">Protein L-isoaspartyl methyltransferase</fullName>
    </alternativeName>
    <alternativeName>
        <fullName evidence="1">Protein-beta-aspartate methyltransferase</fullName>
        <shortName evidence="1">PIMT</shortName>
    </alternativeName>
</protein>
<reference key="1">
    <citation type="submission" date="2009-02" db="EMBL/GenBank/DDBJ databases">
        <title>Vibrio splendidus str. LGP32 complete genome.</title>
        <authorList>
            <person name="Mazel D."/>
            <person name="Le Roux F."/>
        </authorList>
    </citation>
    <scope>NUCLEOTIDE SEQUENCE [LARGE SCALE GENOMIC DNA]</scope>
    <source>
        <strain>LGP32</strain>
    </source>
</reference>
<comment type="function">
    <text evidence="1">Catalyzes the methyl esterification of L-isoaspartyl residues in peptides and proteins that result from spontaneous decomposition of normal L-aspartyl and L-asparaginyl residues. It plays a role in the repair and/or degradation of damaged proteins.</text>
</comment>
<comment type="catalytic activity">
    <reaction evidence="1">
        <text>[protein]-L-isoaspartate + S-adenosyl-L-methionine = [protein]-L-isoaspartate alpha-methyl ester + S-adenosyl-L-homocysteine</text>
        <dbReference type="Rhea" id="RHEA:12705"/>
        <dbReference type="Rhea" id="RHEA-COMP:12143"/>
        <dbReference type="Rhea" id="RHEA-COMP:12144"/>
        <dbReference type="ChEBI" id="CHEBI:57856"/>
        <dbReference type="ChEBI" id="CHEBI:59789"/>
        <dbReference type="ChEBI" id="CHEBI:90596"/>
        <dbReference type="ChEBI" id="CHEBI:90598"/>
        <dbReference type="EC" id="2.1.1.77"/>
    </reaction>
</comment>
<comment type="subcellular location">
    <subcellularLocation>
        <location evidence="1">Cytoplasm</location>
    </subcellularLocation>
</comment>
<comment type="similarity">
    <text evidence="1">Belongs to the methyltransferase superfamily. L-isoaspartyl/D-aspartyl protein methyltransferase family.</text>
</comment>
<dbReference type="EC" id="2.1.1.77" evidence="1"/>
<dbReference type="EMBL" id="FM954972">
    <property type="protein sequence ID" value="CAV19796.1"/>
    <property type="molecule type" value="Genomic_DNA"/>
</dbReference>
<dbReference type="SMR" id="B7VK62"/>
<dbReference type="STRING" id="575788.VS_2601"/>
<dbReference type="KEGG" id="vsp:VS_2601"/>
<dbReference type="eggNOG" id="COG2518">
    <property type="taxonomic scope" value="Bacteria"/>
</dbReference>
<dbReference type="HOGENOM" id="CLU_055432_2_0_6"/>
<dbReference type="Proteomes" id="UP000009100">
    <property type="component" value="Chromosome 1"/>
</dbReference>
<dbReference type="GO" id="GO:0005737">
    <property type="term" value="C:cytoplasm"/>
    <property type="evidence" value="ECO:0007669"/>
    <property type="project" value="UniProtKB-SubCell"/>
</dbReference>
<dbReference type="GO" id="GO:0004719">
    <property type="term" value="F:protein-L-isoaspartate (D-aspartate) O-methyltransferase activity"/>
    <property type="evidence" value="ECO:0007669"/>
    <property type="project" value="UniProtKB-UniRule"/>
</dbReference>
<dbReference type="GO" id="GO:0032259">
    <property type="term" value="P:methylation"/>
    <property type="evidence" value="ECO:0007669"/>
    <property type="project" value="UniProtKB-KW"/>
</dbReference>
<dbReference type="GO" id="GO:0036211">
    <property type="term" value="P:protein modification process"/>
    <property type="evidence" value="ECO:0007669"/>
    <property type="project" value="UniProtKB-UniRule"/>
</dbReference>
<dbReference type="GO" id="GO:0030091">
    <property type="term" value="P:protein repair"/>
    <property type="evidence" value="ECO:0007669"/>
    <property type="project" value="UniProtKB-UniRule"/>
</dbReference>
<dbReference type="CDD" id="cd02440">
    <property type="entry name" value="AdoMet_MTases"/>
    <property type="match status" value="1"/>
</dbReference>
<dbReference type="FunFam" id="3.40.50.150:FF:000010">
    <property type="entry name" value="Protein-L-isoaspartate O-methyltransferase"/>
    <property type="match status" value="1"/>
</dbReference>
<dbReference type="Gene3D" id="3.40.50.150">
    <property type="entry name" value="Vaccinia Virus protein VP39"/>
    <property type="match status" value="1"/>
</dbReference>
<dbReference type="HAMAP" id="MF_00090">
    <property type="entry name" value="PIMT"/>
    <property type="match status" value="1"/>
</dbReference>
<dbReference type="InterPro" id="IPR000682">
    <property type="entry name" value="PCMT"/>
</dbReference>
<dbReference type="InterPro" id="IPR029063">
    <property type="entry name" value="SAM-dependent_MTases_sf"/>
</dbReference>
<dbReference type="NCBIfam" id="TIGR00080">
    <property type="entry name" value="pimt"/>
    <property type="match status" value="1"/>
</dbReference>
<dbReference type="NCBIfam" id="NF001453">
    <property type="entry name" value="PRK00312.1"/>
    <property type="match status" value="1"/>
</dbReference>
<dbReference type="PANTHER" id="PTHR11579">
    <property type="entry name" value="PROTEIN-L-ISOASPARTATE O-METHYLTRANSFERASE"/>
    <property type="match status" value="1"/>
</dbReference>
<dbReference type="PANTHER" id="PTHR11579:SF0">
    <property type="entry name" value="PROTEIN-L-ISOASPARTATE(D-ASPARTATE) O-METHYLTRANSFERASE"/>
    <property type="match status" value="1"/>
</dbReference>
<dbReference type="Pfam" id="PF01135">
    <property type="entry name" value="PCMT"/>
    <property type="match status" value="1"/>
</dbReference>
<dbReference type="SUPFAM" id="SSF53335">
    <property type="entry name" value="S-adenosyl-L-methionine-dependent methyltransferases"/>
    <property type="match status" value="1"/>
</dbReference>
<dbReference type="PROSITE" id="PS01279">
    <property type="entry name" value="PCMT"/>
    <property type="match status" value="1"/>
</dbReference>
<name>PIMT_VIBA3</name>
<sequence>MSNPQAERLVTFLIENGIQDQKVLDAIYLLPRESFLSQAMHHQAYDNNALPIGQGQTISQPYIVAKMTELLELQQDSRVLEIGTGSGYQTAVLAQLVDHVYSVERIKSLQWDAKRRLKQLDFYNISTKHGDGWQGWSSKAPFDAIIVTAAAESIPQALLQQLKDGGRLLIPVGDDEQQLLKIVRHGDEFLSSVIEMVRFVPLVPGELA</sequence>
<feature type="chain" id="PRO_1000192401" description="Protein-L-isoaspartate O-methyltransferase">
    <location>
        <begin position="1"/>
        <end position="208"/>
    </location>
</feature>
<feature type="active site" evidence="1">
    <location>
        <position position="59"/>
    </location>
</feature>
<accession>B7VK62</accession>
<evidence type="ECO:0000255" key="1">
    <source>
        <dbReference type="HAMAP-Rule" id="MF_00090"/>
    </source>
</evidence>
<keyword id="KW-0963">Cytoplasm</keyword>
<keyword id="KW-0489">Methyltransferase</keyword>
<keyword id="KW-0949">S-adenosyl-L-methionine</keyword>
<keyword id="KW-0808">Transferase</keyword>
<gene>
    <name evidence="1" type="primary">pcm</name>
    <name type="ordered locus">VS_2601</name>
</gene>
<proteinExistence type="inferred from homology"/>
<organism>
    <name type="scientific">Vibrio atlanticus (strain LGP32)</name>
    <name type="common">Vibrio splendidus (strain Mel32)</name>
    <dbReference type="NCBI Taxonomy" id="575788"/>
    <lineage>
        <taxon>Bacteria</taxon>
        <taxon>Pseudomonadati</taxon>
        <taxon>Pseudomonadota</taxon>
        <taxon>Gammaproteobacteria</taxon>
        <taxon>Vibrionales</taxon>
        <taxon>Vibrionaceae</taxon>
        <taxon>Vibrio</taxon>
    </lineage>
</organism>